<accession>Q9A6X1</accession>
<protein>
    <recommendedName>
        <fullName evidence="1">NADH-quinone oxidoreductase subunit B</fullName>
        <ecNumber evidence="1">7.1.1.-</ecNumber>
    </recommendedName>
    <alternativeName>
        <fullName evidence="1">NADH dehydrogenase I subunit B</fullName>
    </alternativeName>
    <alternativeName>
        <fullName evidence="1">NDH-1 subunit B</fullName>
    </alternativeName>
</protein>
<dbReference type="EC" id="7.1.1.-" evidence="1"/>
<dbReference type="EMBL" id="AE005673">
    <property type="protein sequence ID" value="AAK23930.1"/>
    <property type="molecule type" value="Genomic_DNA"/>
</dbReference>
<dbReference type="PIR" id="F87491">
    <property type="entry name" value="F87491"/>
</dbReference>
<dbReference type="RefSeq" id="NP_420762.1">
    <property type="nucleotide sequence ID" value="NC_002696.2"/>
</dbReference>
<dbReference type="SMR" id="Q9A6X1"/>
<dbReference type="STRING" id="190650.CC_1955"/>
<dbReference type="EnsemblBacteria" id="AAK23930">
    <property type="protein sequence ID" value="AAK23930"/>
    <property type="gene ID" value="CC_1955"/>
</dbReference>
<dbReference type="KEGG" id="ccr:CC_1955"/>
<dbReference type="PATRIC" id="fig|190650.5.peg.1971"/>
<dbReference type="eggNOG" id="COG0377">
    <property type="taxonomic scope" value="Bacteria"/>
</dbReference>
<dbReference type="HOGENOM" id="CLU_055737_7_3_5"/>
<dbReference type="BioCyc" id="CAULO:CC1955-MONOMER"/>
<dbReference type="Proteomes" id="UP000001816">
    <property type="component" value="Chromosome"/>
</dbReference>
<dbReference type="GO" id="GO:0005886">
    <property type="term" value="C:plasma membrane"/>
    <property type="evidence" value="ECO:0007669"/>
    <property type="project" value="UniProtKB-SubCell"/>
</dbReference>
<dbReference type="GO" id="GO:0045271">
    <property type="term" value="C:respiratory chain complex I"/>
    <property type="evidence" value="ECO:0007669"/>
    <property type="project" value="TreeGrafter"/>
</dbReference>
<dbReference type="GO" id="GO:0051539">
    <property type="term" value="F:4 iron, 4 sulfur cluster binding"/>
    <property type="evidence" value="ECO:0007669"/>
    <property type="project" value="UniProtKB-KW"/>
</dbReference>
<dbReference type="GO" id="GO:0005506">
    <property type="term" value="F:iron ion binding"/>
    <property type="evidence" value="ECO:0007669"/>
    <property type="project" value="UniProtKB-UniRule"/>
</dbReference>
<dbReference type="GO" id="GO:0008137">
    <property type="term" value="F:NADH dehydrogenase (ubiquinone) activity"/>
    <property type="evidence" value="ECO:0007669"/>
    <property type="project" value="InterPro"/>
</dbReference>
<dbReference type="GO" id="GO:0050136">
    <property type="term" value="F:NADH:ubiquinone reductase (non-electrogenic) activity"/>
    <property type="evidence" value="ECO:0007669"/>
    <property type="project" value="UniProtKB-UniRule"/>
</dbReference>
<dbReference type="GO" id="GO:0048038">
    <property type="term" value="F:quinone binding"/>
    <property type="evidence" value="ECO:0007669"/>
    <property type="project" value="UniProtKB-KW"/>
</dbReference>
<dbReference type="GO" id="GO:0009060">
    <property type="term" value="P:aerobic respiration"/>
    <property type="evidence" value="ECO:0007669"/>
    <property type="project" value="TreeGrafter"/>
</dbReference>
<dbReference type="GO" id="GO:0015990">
    <property type="term" value="P:electron transport coupled proton transport"/>
    <property type="evidence" value="ECO:0007669"/>
    <property type="project" value="TreeGrafter"/>
</dbReference>
<dbReference type="FunFam" id="3.40.50.12280:FF:000001">
    <property type="entry name" value="NADH-quinone oxidoreductase subunit B 2"/>
    <property type="match status" value="1"/>
</dbReference>
<dbReference type="Gene3D" id="3.40.50.12280">
    <property type="match status" value="1"/>
</dbReference>
<dbReference type="HAMAP" id="MF_01356">
    <property type="entry name" value="NDH1_NuoB"/>
    <property type="match status" value="1"/>
</dbReference>
<dbReference type="InterPro" id="IPR006137">
    <property type="entry name" value="NADH_UbQ_OxRdtase-like_20kDa"/>
</dbReference>
<dbReference type="InterPro" id="IPR006138">
    <property type="entry name" value="NADH_UQ_OxRdtase_20Kd_su"/>
</dbReference>
<dbReference type="NCBIfam" id="TIGR01957">
    <property type="entry name" value="nuoB_fam"/>
    <property type="match status" value="1"/>
</dbReference>
<dbReference type="NCBIfam" id="NF005012">
    <property type="entry name" value="PRK06411.1"/>
    <property type="match status" value="1"/>
</dbReference>
<dbReference type="PANTHER" id="PTHR11995">
    <property type="entry name" value="NADH DEHYDROGENASE"/>
    <property type="match status" value="1"/>
</dbReference>
<dbReference type="PANTHER" id="PTHR11995:SF14">
    <property type="entry name" value="NADH DEHYDROGENASE [UBIQUINONE] IRON-SULFUR PROTEIN 7, MITOCHONDRIAL"/>
    <property type="match status" value="1"/>
</dbReference>
<dbReference type="Pfam" id="PF01058">
    <property type="entry name" value="Oxidored_q6"/>
    <property type="match status" value="1"/>
</dbReference>
<dbReference type="SUPFAM" id="SSF56770">
    <property type="entry name" value="HydA/Nqo6-like"/>
    <property type="match status" value="1"/>
</dbReference>
<dbReference type="PROSITE" id="PS01150">
    <property type="entry name" value="COMPLEX1_20K"/>
    <property type="match status" value="1"/>
</dbReference>
<feature type="chain" id="PRO_0000376166" description="NADH-quinone oxidoreductase subunit B">
    <location>
        <begin position="1"/>
        <end position="193"/>
    </location>
</feature>
<feature type="binding site" evidence="1">
    <location>
        <position position="72"/>
    </location>
    <ligand>
        <name>[4Fe-4S] cluster</name>
        <dbReference type="ChEBI" id="CHEBI:49883"/>
    </ligand>
</feature>
<feature type="binding site" evidence="1">
    <location>
        <position position="73"/>
    </location>
    <ligand>
        <name>[4Fe-4S] cluster</name>
        <dbReference type="ChEBI" id="CHEBI:49883"/>
    </ligand>
</feature>
<feature type="binding site" evidence="1">
    <location>
        <position position="137"/>
    </location>
    <ligand>
        <name>[4Fe-4S] cluster</name>
        <dbReference type="ChEBI" id="CHEBI:49883"/>
    </ligand>
</feature>
<feature type="binding site" evidence="1">
    <location>
        <position position="167"/>
    </location>
    <ligand>
        <name>[4Fe-4S] cluster</name>
        <dbReference type="ChEBI" id="CHEBI:49883"/>
    </ligand>
</feature>
<organism>
    <name type="scientific">Caulobacter vibrioides (strain ATCC 19089 / CIP 103742 / CB 15)</name>
    <name type="common">Caulobacter crescentus</name>
    <dbReference type="NCBI Taxonomy" id="190650"/>
    <lineage>
        <taxon>Bacteria</taxon>
        <taxon>Pseudomonadati</taxon>
        <taxon>Pseudomonadota</taxon>
        <taxon>Alphaproteobacteria</taxon>
        <taxon>Caulobacterales</taxon>
        <taxon>Caulobacteraceae</taxon>
        <taxon>Caulobacter</taxon>
    </lineage>
</organism>
<keyword id="KW-0004">4Fe-4S</keyword>
<keyword id="KW-0997">Cell inner membrane</keyword>
<keyword id="KW-1003">Cell membrane</keyword>
<keyword id="KW-0408">Iron</keyword>
<keyword id="KW-0411">Iron-sulfur</keyword>
<keyword id="KW-0472">Membrane</keyword>
<keyword id="KW-0479">Metal-binding</keyword>
<keyword id="KW-0520">NAD</keyword>
<keyword id="KW-0874">Quinone</keyword>
<keyword id="KW-1185">Reference proteome</keyword>
<keyword id="KW-1278">Translocase</keyword>
<keyword id="KW-0813">Transport</keyword>
<keyword id="KW-0830">Ubiquinone</keyword>
<evidence type="ECO:0000255" key="1">
    <source>
        <dbReference type="HAMAP-Rule" id="MF_01356"/>
    </source>
</evidence>
<proteinExistence type="inferred from homology"/>
<reference key="1">
    <citation type="journal article" date="2001" name="Proc. Natl. Acad. Sci. U.S.A.">
        <title>Complete genome sequence of Caulobacter crescentus.</title>
        <authorList>
            <person name="Nierman W.C."/>
            <person name="Feldblyum T.V."/>
            <person name="Laub M.T."/>
            <person name="Paulsen I.T."/>
            <person name="Nelson K.E."/>
            <person name="Eisen J.A."/>
            <person name="Heidelberg J.F."/>
            <person name="Alley M.R.K."/>
            <person name="Ohta N."/>
            <person name="Maddock J.R."/>
            <person name="Potocka I."/>
            <person name="Nelson W.C."/>
            <person name="Newton A."/>
            <person name="Stephens C."/>
            <person name="Phadke N.D."/>
            <person name="Ely B."/>
            <person name="DeBoy R.T."/>
            <person name="Dodson R.J."/>
            <person name="Durkin A.S."/>
            <person name="Gwinn M.L."/>
            <person name="Haft D.H."/>
            <person name="Kolonay J.F."/>
            <person name="Smit J."/>
            <person name="Craven M.B."/>
            <person name="Khouri H.M."/>
            <person name="Shetty J."/>
            <person name="Berry K.J."/>
            <person name="Utterback T.R."/>
            <person name="Tran K."/>
            <person name="Wolf A.M."/>
            <person name="Vamathevan J.J."/>
            <person name="Ermolaeva M.D."/>
            <person name="White O."/>
            <person name="Salzberg S.L."/>
            <person name="Venter J.C."/>
            <person name="Shapiro L."/>
            <person name="Fraser C.M."/>
        </authorList>
    </citation>
    <scope>NUCLEOTIDE SEQUENCE [LARGE SCALE GENOMIC DNA]</scope>
    <source>
        <strain>ATCC 19089 / CIP 103742 / CB 15</strain>
    </source>
</reference>
<sequence>MGVIVPGNSSPVPALSAGRSTVEGYDPKLHDPFFDGVSQQLADKGFITAAADDLITWARTGSLMWMTFGLACCAVEMMQASMPRYDLERYGFAPRASPRQSDVMIVAGTLTNKMAPALRKVYDQMPEPRYVISMGSCANGGGYYYYSYSVVRGCDRVVPVDIYVPGCPPTAEALVYGVLQLQKKIRRTGTIER</sequence>
<comment type="function">
    <text evidence="1">NDH-1 shuttles electrons from NADH, via FMN and iron-sulfur (Fe-S) centers, to quinones in the respiratory chain. The immediate electron acceptor for the enzyme in this species is believed to be ubiquinone. Couples the redox reaction to proton translocation (for every two electrons transferred, four hydrogen ions are translocated across the cytoplasmic membrane), and thus conserves the redox energy in a proton gradient.</text>
</comment>
<comment type="catalytic activity">
    <reaction evidence="1">
        <text>a quinone + NADH + 5 H(+)(in) = a quinol + NAD(+) + 4 H(+)(out)</text>
        <dbReference type="Rhea" id="RHEA:57888"/>
        <dbReference type="ChEBI" id="CHEBI:15378"/>
        <dbReference type="ChEBI" id="CHEBI:24646"/>
        <dbReference type="ChEBI" id="CHEBI:57540"/>
        <dbReference type="ChEBI" id="CHEBI:57945"/>
        <dbReference type="ChEBI" id="CHEBI:132124"/>
    </reaction>
</comment>
<comment type="cofactor">
    <cofactor evidence="1">
        <name>[4Fe-4S] cluster</name>
        <dbReference type="ChEBI" id="CHEBI:49883"/>
    </cofactor>
    <text evidence="1">Binds 1 [4Fe-4S] cluster.</text>
</comment>
<comment type="subunit">
    <text evidence="1">NDH-1 is composed of 14 different subunits. Subunits NuoB, C, D, E, F, and G constitute the peripheral sector of the complex.</text>
</comment>
<comment type="subcellular location">
    <subcellularLocation>
        <location evidence="1">Cell inner membrane</location>
        <topology evidence="1">Peripheral membrane protein</topology>
        <orientation evidence="1">Cytoplasmic side</orientation>
    </subcellularLocation>
</comment>
<comment type="similarity">
    <text evidence="1">Belongs to the complex I 20 kDa subunit family.</text>
</comment>
<gene>
    <name evidence="1" type="primary">nuoB</name>
    <name type="ordered locus">CC_1955</name>
</gene>
<name>NUOB_CAUVC</name>